<feature type="signal peptide" description="Tat-type signal" evidence="2 4">
    <location>
        <begin position="1"/>
        <end position="39"/>
    </location>
</feature>
<feature type="chain" id="PRO_0000019151" description="Trimethylamine-N-oxide reductase 1">
    <location>
        <begin position="40"/>
        <end position="848"/>
    </location>
</feature>
<feature type="binding site" evidence="1">
    <location>
        <position position="191"/>
    </location>
    <ligand>
        <name>Mo-bis(molybdopterin guanine dinucleotide)</name>
        <dbReference type="ChEBI" id="CHEBI:60539"/>
    </ligand>
    <ligandPart>
        <name>Mo</name>
        <dbReference type="ChEBI" id="CHEBI:28685"/>
    </ligandPart>
</feature>
<feature type="sequence conflict" description="In Ref. 1; CAA52095." evidence="5" ref="1">
    <original>L</original>
    <variation>R</variation>
    <location>
        <position position="173"/>
    </location>
</feature>
<feature type="sequence conflict" description="In Ref. 1; CAA52095." evidence="5" ref="1">
    <original>A</original>
    <variation>R</variation>
    <location>
        <position position="176"/>
    </location>
</feature>
<feature type="sequence conflict" description="In Ref. 1; AA sequence." evidence="5" ref="1">
    <original>A</original>
    <variation>R</variation>
    <location>
        <position position="256"/>
    </location>
</feature>
<feature type="sequence conflict" description="In Ref. 1; AA sequence." evidence="5" ref="1">
    <original>V</original>
    <variation>S</variation>
    <location>
        <position position="258"/>
    </location>
</feature>
<feature type="sequence conflict" description="In Ref. 1; CAA52095." evidence="5" ref="1">
    <original>R</original>
    <variation>G</variation>
    <location>
        <position position="281"/>
    </location>
</feature>
<feature type="sequence conflict" description="In Ref. 1; CAA52095." evidence="5" ref="1">
    <original>Q</original>
    <variation>E</variation>
    <location>
        <position position="325"/>
    </location>
</feature>
<feature type="sequence conflict" description="In Ref. 1; CAA52095." evidence="5" ref="1">
    <original>T</original>
    <variation>S</variation>
    <location>
        <position position="348"/>
    </location>
</feature>
<feature type="sequence conflict" description="In Ref. 1; CAA52095." evidence="5" ref="1">
    <original>KL</original>
    <variation>NV</variation>
    <location>
        <begin position="503"/>
        <end position="504"/>
    </location>
</feature>
<feature type="sequence conflict" description="In Ref. 1; CAA52095." evidence="5" ref="1">
    <original>QQ</original>
    <variation>HE</variation>
    <location>
        <begin position="713"/>
        <end position="714"/>
    </location>
</feature>
<feature type="sequence conflict" description="In Ref. 1; CAA52095." evidence="5" ref="1">
    <original>L</original>
    <variation>M</variation>
    <location>
        <position position="751"/>
    </location>
</feature>
<feature type="sequence conflict" description="In Ref. 1; CAA52095." evidence="5" ref="1">
    <original>P</original>
    <variation>L</variation>
    <location>
        <position position="781"/>
    </location>
</feature>
<protein>
    <recommendedName>
        <fullName>Trimethylamine-N-oxide reductase 1</fullName>
        <shortName>TMAO reductase 1</shortName>
        <shortName>Trimethylamine oxidase 1</shortName>
        <ecNumber>1.7.2.3</ecNumber>
    </recommendedName>
</protein>
<reference key="1">
    <citation type="journal article" date="1994" name="Mol. Microbiol.">
        <title>TMAO anaerobic respiration in Escherichia coli: involvement of the tor operon.</title>
        <authorList>
            <person name="Mejean V."/>
            <person name="Iobbi-Nivol C."/>
            <person name="Lepelletier M."/>
            <person name="Giordano G."/>
            <person name="Chippaux M."/>
            <person name="Pascal M.-C."/>
        </authorList>
    </citation>
    <scope>NUCLEOTIDE SEQUENCE [GENOMIC DNA]</scope>
    <scope>PROTEIN SEQUENCE OF 40-46</scope>
    <source>
        <strain>K12</strain>
    </source>
</reference>
<reference key="2">
    <citation type="journal article" date="1996" name="DNA Res.">
        <title>A 718-kb DNA sequence of the Escherichia coli K-12 genome corresponding to the 12.7-28.0 min region on the linkage map.</title>
        <authorList>
            <person name="Oshima T."/>
            <person name="Aiba H."/>
            <person name="Baba T."/>
            <person name="Fujita K."/>
            <person name="Hayashi K."/>
            <person name="Honjo A."/>
            <person name="Ikemoto K."/>
            <person name="Inada T."/>
            <person name="Itoh T."/>
            <person name="Kajihara M."/>
            <person name="Kanai K."/>
            <person name="Kashimoto K."/>
            <person name="Kimura S."/>
            <person name="Kitagawa M."/>
            <person name="Makino K."/>
            <person name="Masuda S."/>
            <person name="Miki T."/>
            <person name="Mizobuchi K."/>
            <person name="Mori H."/>
            <person name="Motomura K."/>
            <person name="Nakamura Y."/>
            <person name="Nashimoto H."/>
            <person name="Nishio Y."/>
            <person name="Saito N."/>
            <person name="Sampei G."/>
            <person name="Seki Y."/>
            <person name="Tagami H."/>
            <person name="Takemoto K."/>
            <person name="Wada C."/>
            <person name="Yamamoto Y."/>
            <person name="Yano M."/>
            <person name="Horiuchi T."/>
        </authorList>
    </citation>
    <scope>NUCLEOTIDE SEQUENCE [LARGE SCALE GENOMIC DNA]</scope>
    <source>
        <strain>K12 / W3110 / ATCC 27325 / DSM 5911</strain>
    </source>
</reference>
<reference key="3">
    <citation type="journal article" date="1997" name="Science">
        <title>The complete genome sequence of Escherichia coli K-12.</title>
        <authorList>
            <person name="Blattner F.R."/>
            <person name="Plunkett G. III"/>
            <person name="Bloch C.A."/>
            <person name="Perna N.T."/>
            <person name="Burland V."/>
            <person name="Riley M."/>
            <person name="Collado-Vides J."/>
            <person name="Glasner J.D."/>
            <person name="Rode C.K."/>
            <person name="Mayhew G.F."/>
            <person name="Gregor J."/>
            <person name="Davis N.W."/>
            <person name="Kirkpatrick H.A."/>
            <person name="Goeden M.A."/>
            <person name="Rose D.J."/>
            <person name="Mau B."/>
            <person name="Shao Y."/>
        </authorList>
    </citation>
    <scope>NUCLEOTIDE SEQUENCE [LARGE SCALE GENOMIC DNA]</scope>
    <source>
        <strain>K12 / MG1655 / ATCC 47076</strain>
    </source>
</reference>
<reference key="4">
    <citation type="journal article" date="2006" name="Mol. Syst. Biol.">
        <title>Highly accurate genome sequences of Escherichia coli K-12 strains MG1655 and W3110.</title>
        <authorList>
            <person name="Hayashi K."/>
            <person name="Morooka N."/>
            <person name="Yamamoto Y."/>
            <person name="Fujita K."/>
            <person name="Isono K."/>
            <person name="Choi S."/>
            <person name="Ohtsubo E."/>
            <person name="Baba T."/>
            <person name="Wanner B.L."/>
            <person name="Mori H."/>
            <person name="Horiuchi T."/>
        </authorList>
    </citation>
    <scope>NUCLEOTIDE SEQUENCE [LARGE SCALE GENOMIC DNA]</scope>
    <source>
        <strain>K12 / W3110 / ATCC 27325 / DSM 5911</strain>
    </source>
</reference>
<reference key="5">
    <citation type="journal article" date="1994" name="Proc. Natl. Acad. Sci. U.S.A.">
        <title>An analogue of the DnaJ molecular chaperone in Escherichia coli.</title>
        <authorList>
            <person name="Ueguchi C."/>
            <person name="Kakeda M."/>
            <person name="Yamada H."/>
            <person name="Mizuno T."/>
        </authorList>
    </citation>
    <scope>NUCLEOTIDE SEQUENCE [GENOMIC DNA] OF 767-848</scope>
    <source>
        <strain>K12</strain>
    </source>
</reference>
<reference key="6">
    <citation type="journal article" date="1989" name="Biochim. Biophys. Acta">
        <title>The inducible trimethylamine N-oxide reductase of Escherichia coli K12: its localization and inducers.</title>
        <authorList>
            <person name="Silvestro A."/>
            <person name="Pommier J."/>
            <person name="Pascal M.-C."/>
            <person name="Giordano G."/>
        </authorList>
    </citation>
    <scope>SUBCELLULAR LOCATION</scope>
</reference>
<reference key="7">
    <citation type="journal article" date="1998" name="EMBO J.">
        <title>A novel Sec-independent periplasmic protein translocation pathway in Escherichia coli.</title>
        <authorList>
            <person name="Santini C.-L."/>
            <person name="Ize B."/>
            <person name="Chanal A."/>
            <person name="Mueller M."/>
            <person name="Giordano G."/>
            <person name="Wu L.-F."/>
        </authorList>
    </citation>
    <scope>SEC-INDEPENDENT TRANSLOCATION</scope>
    <scope>PROBABLE EXPORT VIA TAT-SYSTEM</scope>
</reference>
<reference key="8">
    <citation type="journal article" date="2007" name="J. Biol. Chem.">
        <title>Export pathway selectivity of Escherichia coli twin arginine translocation signal peptides.</title>
        <authorList>
            <person name="Tullman-Ercek D."/>
            <person name="DeLisa M.P."/>
            <person name="Kawarasaki Y."/>
            <person name="Iranpour P."/>
            <person name="Ribnicky B."/>
            <person name="Palmer T."/>
            <person name="Georgiou G."/>
        </authorList>
    </citation>
    <scope>EXPORT VIA THE TAT-SYSTEM</scope>
</reference>
<proteinExistence type="evidence at protein level"/>
<evidence type="ECO:0000250" key="1"/>
<evidence type="ECO:0000255" key="2">
    <source>
        <dbReference type="PROSITE-ProRule" id="PRU00648"/>
    </source>
</evidence>
<evidence type="ECO:0000269" key="3">
    <source>
    </source>
</evidence>
<evidence type="ECO:0000269" key="4">
    <source>
    </source>
</evidence>
<evidence type="ECO:0000305" key="5"/>
<keyword id="KW-0002">3D-structure</keyword>
<keyword id="KW-0903">Direct protein sequencing</keyword>
<keyword id="KW-0479">Metal-binding</keyword>
<keyword id="KW-0500">Molybdenum</keyword>
<keyword id="KW-0560">Oxidoreductase</keyword>
<keyword id="KW-0574">Periplasm</keyword>
<keyword id="KW-1185">Reference proteome</keyword>
<keyword id="KW-0732">Signal</keyword>
<name>TORA_ECOLI</name>
<gene>
    <name type="primary">torA</name>
    <name type="ordered locus">b0997</name>
    <name type="ordered locus">JW0982</name>
</gene>
<dbReference type="EC" id="1.7.2.3"/>
<dbReference type="EMBL" id="X73888">
    <property type="protein sequence ID" value="CAA52095.1"/>
    <property type="molecule type" value="Genomic_DNA"/>
</dbReference>
<dbReference type="EMBL" id="U00096">
    <property type="protein sequence ID" value="AAC74082.1"/>
    <property type="molecule type" value="Genomic_DNA"/>
</dbReference>
<dbReference type="EMBL" id="AP009048">
    <property type="protein sequence ID" value="BAA36139.1"/>
    <property type="molecule type" value="Genomic_DNA"/>
</dbReference>
<dbReference type="EMBL" id="D16500">
    <property type="status" value="NOT_ANNOTATED_CDS"/>
    <property type="molecule type" value="Genomic_DNA"/>
</dbReference>
<dbReference type="PIR" id="C64841">
    <property type="entry name" value="C64841"/>
</dbReference>
<dbReference type="RefSeq" id="NP_415517.1">
    <property type="nucleotide sequence ID" value="NC_000913.3"/>
</dbReference>
<dbReference type="RefSeq" id="WP_001062091.1">
    <property type="nucleotide sequence ID" value="NZ_SSUW01000007.1"/>
</dbReference>
<dbReference type="PDB" id="9H4T">
    <property type="method" value="X-ray"/>
    <property type="resolution" value="1.86 A"/>
    <property type="chains" value="A/B=1-848"/>
</dbReference>
<dbReference type="PDBsum" id="9H4T"/>
<dbReference type="SMR" id="P33225"/>
<dbReference type="BioGRID" id="4260701">
    <property type="interactions" value="28"/>
</dbReference>
<dbReference type="ComplexPortal" id="CPX-319">
    <property type="entry name" value="Trimethylamine-N-oxide reductase TorAC complex"/>
</dbReference>
<dbReference type="DIP" id="DIP-11013N"/>
<dbReference type="FunCoup" id="P33225">
    <property type="interactions" value="410"/>
</dbReference>
<dbReference type="IntAct" id="P33225">
    <property type="interactions" value="17"/>
</dbReference>
<dbReference type="MINT" id="P33225"/>
<dbReference type="STRING" id="511145.b0997"/>
<dbReference type="TCDB" id="5.A.3.4.1">
    <property type="family name" value="the prokaryotic molybdopterin-containing oxidoreductase (pmo) family"/>
</dbReference>
<dbReference type="PaxDb" id="511145-b0997"/>
<dbReference type="EnsemblBacteria" id="AAC74082">
    <property type="protein sequence ID" value="AAC74082"/>
    <property type="gene ID" value="b0997"/>
</dbReference>
<dbReference type="GeneID" id="946267"/>
<dbReference type="KEGG" id="ecj:JW0982"/>
<dbReference type="KEGG" id="eco:b0997"/>
<dbReference type="KEGG" id="ecoc:C3026_06075"/>
<dbReference type="PATRIC" id="fig|1411691.4.peg.1274"/>
<dbReference type="EchoBASE" id="EB1761"/>
<dbReference type="eggNOG" id="COG0243">
    <property type="taxonomic scope" value="Bacteria"/>
</dbReference>
<dbReference type="HOGENOM" id="CLU_000422_13_3_6"/>
<dbReference type="InParanoid" id="P33225"/>
<dbReference type="OMA" id="DINWNGK"/>
<dbReference type="OrthoDB" id="9815647at2"/>
<dbReference type="PhylomeDB" id="P33225"/>
<dbReference type="BioCyc" id="EcoCyc:TORA-MONOMER"/>
<dbReference type="BioCyc" id="MetaCyc:TORA-MONOMER"/>
<dbReference type="SABIO-RK" id="P33225"/>
<dbReference type="PRO" id="PR:P33225"/>
<dbReference type="Proteomes" id="UP000000625">
    <property type="component" value="Chromosome"/>
</dbReference>
<dbReference type="GO" id="GO:0030288">
    <property type="term" value="C:outer membrane-bounded periplasmic space"/>
    <property type="evidence" value="ECO:0000314"/>
    <property type="project" value="ComplexPortal"/>
</dbReference>
<dbReference type="GO" id="GO:1904852">
    <property type="term" value="C:trimethylamine-N-oxide reductase (cytochrome c) complex"/>
    <property type="evidence" value="ECO:0000353"/>
    <property type="project" value="ComplexPortal"/>
</dbReference>
<dbReference type="GO" id="GO:0009055">
    <property type="term" value="F:electron transfer activity"/>
    <property type="evidence" value="ECO:0000314"/>
    <property type="project" value="EcoCyc"/>
</dbReference>
<dbReference type="GO" id="GO:0030151">
    <property type="term" value="F:molybdenum ion binding"/>
    <property type="evidence" value="ECO:0000318"/>
    <property type="project" value="GO_Central"/>
</dbReference>
<dbReference type="GO" id="GO:0043546">
    <property type="term" value="F:molybdopterin cofactor binding"/>
    <property type="evidence" value="ECO:0000314"/>
    <property type="project" value="EcoCyc"/>
</dbReference>
<dbReference type="GO" id="GO:0050626">
    <property type="term" value="F:trimethylamine-N-oxide reductase (cytochrome c) activity"/>
    <property type="evidence" value="ECO:0000314"/>
    <property type="project" value="EcoCyc"/>
</dbReference>
<dbReference type="GO" id="GO:0009060">
    <property type="term" value="P:aerobic respiration"/>
    <property type="evidence" value="ECO:0000314"/>
    <property type="project" value="ComplexPortal"/>
</dbReference>
<dbReference type="GO" id="GO:0019645">
    <property type="term" value="P:anaerobic electron transport chain"/>
    <property type="evidence" value="ECO:0000314"/>
    <property type="project" value="ComplexPortal"/>
</dbReference>
<dbReference type="GO" id="GO:0009061">
    <property type="term" value="P:anaerobic respiration"/>
    <property type="evidence" value="ECO:0000270"/>
    <property type="project" value="EcoCyc"/>
</dbReference>
<dbReference type="GO" id="GO:0006885">
    <property type="term" value="P:regulation of pH"/>
    <property type="evidence" value="ECO:0000314"/>
    <property type="project" value="ComplexPortal"/>
</dbReference>
<dbReference type="CDD" id="cd02793">
    <property type="entry name" value="MopB_CT_DMSOR-BSOR-TMAOR"/>
    <property type="match status" value="1"/>
</dbReference>
<dbReference type="CDD" id="cd02769">
    <property type="entry name" value="MopB_DMSOR-BSOR-TMAOR"/>
    <property type="match status" value="1"/>
</dbReference>
<dbReference type="FunFam" id="2.40.40.20:FF:000009">
    <property type="entry name" value="Biotin sulfoxide reductase 2"/>
    <property type="match status" value="1"/>
</dbReference>
<dbReference type="FunFam" id="3.40.228.10:FF:000003">
    <property type="entry name" value="Biotin sulfoxide reductase 2"/>
    <property type="match status" value="1"/>
</dbReference>
<dbReference type="Gene3D" id="2.40.40.20">
    <property type="match status" value="1"/>
</dbReference>
<dbReference type="Gene3D" id="3.40.50.740">
    <property type="match status" value="1"/>
</dbReference>
<dbReference type="Gene3D" id="3.40.228.10">
    <property type="entry name" value="Dimethylsulfoxide Reductase, domain 2"/>
    <property type="match status" value="1"/>
</dbReference>
<dbReference type="Gene3D" id="3.90.55.10">
    <property type="entry name" value="Dimethylsulfoxide Reductase, domain 3"/>
    <property type="match status" value="1"/>
</dbReference>
<dbReference type="InterPro" id="IPR009010">
    <property type="entry name" value="Asp_de-COase-like_dom_sf"/>
</dbReference>
<dbReference type="InterPro" id="IPR006658">
    <property type="entry name" value="BisC"/>
</dbReference>
<dbReference type="InterPro" id="IPR041954">
    <property type="entry name" value="CT_DMSOR/BSOR/TMAOR"/>
</dbReference>
<dbReference type="InterPro" id="IPR041460">
    <property type="entry name" value="Molybdopterin_N"/>
</dbReference>
<dbReference type="InterPro" id="IPR006657">
    <property type="entry name" value="MoPterin_dinucl-bd_dom"/>
</dbReference>
<dbReference type="InterPro" id="IPR006656">
    <property type="entry name" value="Mopterin_OxRdtase"/>
</dbReference>
<dbReference type="InterPro" id="IPR006655">
    <property type="entry name" value="Mopterin_OxRdtase_prok_CS"/>
</dbReference>
<dbReference type="InterPro" id="IPR050612">
    <property type="entry name" value="Prok_Mopterin_Oxidored"/>
</dbReference>
<dbReference type="InterPro" id="IPR006311">
    <property type="entry name" value="TAT_signal"/>
</dbReference>
<dbReference type="InterPro" id="IPR011887">
    <property type="entry name" value="TorA"/>
</dbReference>
<dbReference type="NCBIfam" id="TIGR00509">
    <property type="entry name" value="bisC_fam"/>
    <property type="match status" value="1"/>
</dbReference>
<dbReference type="NCBIfam" id="NF011682">
    <property type="entry name" value="PRK15102.1"/>
    <property type="match status" value="1"/>
</dbReference>
<dbReference type="NCBIfam" id="TIGR02164">
    <property type="entry name" value="torA"/>
    <property type="match status" value="1"/>
</dbReference>
<dbReference type="PANTHER" id="PTHR43742">
    <property type="entry name" value="TRIMETHYLAMINE-N-OXIDE REDUCTASE"/>
    <property type="match status" value="1"/>
</dbReference>
<dbReference type="PANTHER" id="PTHR43742:SF4">
    <property type="entry name" value="TRIMETHYLAMINE-N-OXIDE REDUCTASE 1"/>
    <property type="match status" value="1"/>
</dbReference>
<dbReference type="Pfam" id="PF00384">
    <property type="entry name" value="Molybdopterin"/>
    <property type="match status" value="1"/>
</dbReference>
<dbReference type="Pfam" id="PF18364">
    <property type="entry name" value="Molybdopterin_N"/>
    <property type="match status" value="1"/>
</dbReference>
<dbReference type="Pfam" id="PF01568">
    <property type="entry name" value="Molydop_binding"/>
    <property type="match status" value="1"/>
</dbReference>
<dbReference type="SUPFAM" id="SSF50692">
    <property type="entry name" value="ADC-like"/>
    <property type="match status" value="1"/>
</dbReference>
<dbReference type="SUPFAM" id="SSF53706">
    <property type="entry name" value="Formate dehydrogenase/DMSO reductase, domains 1-3"/>
    <property type="match status" value="1"/>
</dbReference>
<dbReference type="PROSITE" id="PS00490">
    <property type="entry name" value="MOLYBDOPTERIN_PROK_2"/>
    <property type="match status" value="1"/>
</dbReference>
<dbReference type="PROSITE" id="PS00932">
    <property type="entry name" value="MOLYBDOPTERIN_PROK_3"/>
    <property type="match status" value="1"/>
</dbReference>
<dbReference type="PROSITE" id="PS51318">
    <property type="entry name" value="TAT"/>
    <property type="match status" value="1"/>
</dbReference>
<organism>
    <name type="scientific">Escherichia coli (strain K12)</name>
    <dbReference type="NCBI Taxonomy" id="83333"/>
    <lineage>
        <taxon>Bacteria</taxon>
        <taxon>Pseudomonadati</taxon>
        <taxon>Pseudomonadota</taxon>
        <taxon>Gammaproteobacteria</taxon>
        <taxon>Enterobacterales</taxon>
        <taxon>Enterobacteriaceae</taxon>
        <taxon>Escherichia</taxon>
    </lineage>
</organism>
<sequence length="848" mass="94456">MNNNDLFQASRRRFLAQLGGLTVAGMLGPSLLTPRRATAAQAATDAVISKEGILTGSHWGAIRATVKDGRFVAAKPFELDKYPSKMIAGLPDHVHNAARIRYPMVRVDWLRKRHLSDTSQRGDNRFVRVSWDEALDMFYEELERVQKTHGPSALLTASGWQSTGMFHNASGMLAKAIALHGNSVGTGGDYSTGAAQVILPRVVGSMEVYEQQTSWPLVLQNSKTIVLWGSDLLKNQQANWWCPDHDVYEYYAQLKAKVAAGEIEVISIDPVVTSTHEYLGREHVKHIAVNPQTDVPLQLALAHTLYSENLYDKNFLANYCVGFEQFLPYLLGEKDGQPKDAAWAEKLTGIDAETIRGLARQMAANRTQIIAGWCVQRMQHGEQWAWMIVVLAAMLGQIGLPGGGFGFGWHYNGAGTPGRKGVILSGFSGSTSIPPVHDNSDYKGYSSTIPIARFIDAILEPGKVINWNGKSVKLPPLKMCIFAGTNPFHRHQQINRIIEGLRKLETVIAIDNQWTSTCRFADIVLPATTQFERNDLDQYGNHSNRGIIAMKQVVPPQFEARNDFDIFRELCRRFNREEAFTEGLDEMGWLKRIWQEGVQQGKGRGVHLPAFDDFWNNKEYVEFDHPQMFVRHQAFREDPDLEPLGTPSGLIEIYSKTIADMNYDDCQGHPMWFEKIERSHGGPGSQKYPLHLQSVHPDFRLHSQLCESETLRQQYTVAGKEPVFINPQDASARGIRNGDVVRVFNARGQVLAGAVVSDRYAPGVARIHEGAWYDPDKGGEPGALCKYGNPNVLTIDIGTSQLAQATSAHTTLVEIEKYNGTVEQVTAFNGPVEMVAQCEYVPASQVKS</sequence>
<comment type="function">
    <text>Reduces trimethylamine-N-oxide (TMAO) into trimethylamine; an anaerobic reaction coupled to energy-yielding reactions.</text>
</comment>
<comment type="catalytic activity">
    <reaction>
        <text>trimethylamine + 2 Fe(III)-[cytochrome c] + H2O = trimethylamine N-oxide + 2 Fe(II)-[cytochrome c] + 3 H(+)</text>
        <dbReference type="Rhea" id="RHEA:24236"/>
        <dbReference type="Rhea" id="RHEA-COMP:10350"/>
        <dbReference type="Rhea" id="RHEA-COMP:14399"/>
        <dbReference type="ChEBI" id="CHEBI:15377"/>
        <dbReference type="ChEBI" id="CHEBI:15378"/>
        <dbReference type="ChEBI" id="CHEBI:15724"/>
        <dbReference type="ChEBI" id="CHEBI:29033"/>
        <dbReference type="ChEBI" id="CHEBI:29034"/>
        <dbReference type="ChEBI" id="CHEBI:58389"/>
        <dbReference type="EC" id="1.7.2.3"/>
    </reaction>
</comment>
<comment type="cofactor">
    <cofactor evidence="1">
        <name>Mo-bis(molybdopterin guanine dinucleotide)</name>
        <dbReference type="ChEBI" id="CHEBI:60539"/>
    </cofactor>
    <text evidence="1">Binds 1 molybdenum-bis(molybdopterin guanine dinucleotide) (Mo-bis-MGD) cofactor per subunit.</text>
</comment>
<comment type="subunit">
    <text>Interacts with the N-terminal domain of TorC.</text>
</comment>
<comment type="interaction">
    <interactant intactId="EBI-557008">
        <id>P33225</id>
    </interactant>
    <interactant intactId="EBI-547203">
        <id>P0A9M0</id>
        <label>lon</label>
    </interactant>
    <organismsDiffer>false</organismsDiffer>
    <experiments>2</experiments>
</comment>
<comment type="interaction">
    <interactant intactId="EBI-557008">
        <id>P33225</id>
    </interactant>
    <interactant intactId="EBI-553710">
        <id>P33226</id>
        <label>torC</label>
    </interactant>
    <organismsDiffer>false</organismsDiffer>
    <experiments>3</experiments>
</comment>
<comment type="interaction">
    <interactant intactId="EBI-557008">
        <id>P33225</id>
    </interactant>
    <interactant intactId="EBI-6406226">
        <id>P36662</id>
        <label>torD</label>
    </interactant>
    <organismsDiffer>false</organismsDiffer>
    <experiments>24</experiments>
</comment>
<comment type="subcellular location">
    <subcellularLocation>
        <location evidence="3">Periplasm</location>
    </subcellularLocation>
</comment>
<comment type="PTM">
    <text>Exported by the Tat system. The position of the signal peptide cleavage has been experimentally proven.</text>
</comment>
<comment type="similarity">
    <text evidence="5">Belongs to the prokaryotic molybdopterin-containing oxidoreductase family.</text>
</comment>
<accession>P33225</accession>
<accession>P78227</accession>